<feature type="signal peptide">
    <location>
        <begin position="1"/>
        <end position="20"/>
    </location>
</feature>
<feature type="chain" id="PRO_0000007799" description="Elicitin">
    <location>
        <begin position="21"/>
        <end position="118"/>
    </location>
</feature>
<feature type="disulfide bond" evidence="1">
    <location>
        <begin position="23"/>
        <end position="91"/>
    </location>
</feature>
<feature type="disulfide bond" evidence="1">
    <location>
        <begin position="47"/>
        <end position="76"/>
    </location>
</feature>
<feature type="disulfide bond" evidence="1">
    <location>
        <begin position="71"/>
        <end position="115"/>
    </location>
</feature>
<protein>
    <recommendedName>
        <fullName>Elicitin</fullName>
    </recommendedName>
</protein>
<reference key="1">
    <citation type="journal article" date="1993" name="Mol. Plant Microbe Interact.">
        <title>A gene encoding a host-specific elicitor protein of Phytophthora parasitica.</title>
        <authorList>
            <person name="Kamoun S."/>
            <person name="Klucher K.M."/>
            <person name="Coffey M.D."/>
            <person name="Tyler B.M."/>
        </authorList>
    </citation>
    <scope>NUCLEOTIDE SEQUENCE [GENOMIC DNA]</scope>
    <source>
        <strain>Isolate P1979</strain>
    </source>
</reference>
<sequence>MNFRALFAATVAALVGSTSATTCTTTQQTAAYVALVSILSDTSFNQCSTDSGYSMLTATSLPTTEQYKLMCASTACKTMINKIVTLNPPDCELTVPTSGLVLNVFTYANGFSSTCASL</sequence>
<proteinExistence type="inferred from homology"/>
<evidence type="ECO:0000250" key="1"/>
<evidence type="ECO:0000305" key="2"/>
<dbReference type="EMBL" id="S67432">
    <property type="protein sequence ID" value="AAB29433.1"/>
    <property type="molecule type" value="Genomic_DNA"/>
</dbReference>
<dbReference type="SMR" id="P41801"/>
<dbReference type="VEuPathDB" id="FungiDB:PPTG_09075"/>
<dbReference type="OrthoDB" id="118103at2759"/>
<dbReference type="GO" id="GO:0005576">
    <property type="term" value="C:extracellular region"/>
    <property type="evidence" value="ECO:0007669"/>
    <property type="project" value="UniProtKB-SubCell"/>
</dbReference>
<dbReference type="GO" id="GO:0052040">
    <property type="term" value="P:symbiont-mediated perturbation of host programmed cell death"/>
    <property type="evidence" value="ECO:0007669"/>
    <property type="project" value="UniProtKB-KW"/>
</dbReference>
<dbReference type="Gene3D" id="1.10.239.10">
    <property type="entry name" value="Elicitin domain"/>
    <property type="match status" value="1"/>
</dbReference>
<dbReference type="InterPro" id="IPR002200">
    <property type="entry name" value="Elicitin"/>
</dbReference>
<dbReference type="InterPro" id="IPR036470">
    <property type="entry name" value="Elicitin_sf"/>
</dbReference>
<dbReference type="Pfam" id="PF00964">
    <property type="entry name" value="Elicitin"/>
    <property type="match status" value="1"/>
</dbReference>
<dbReference type="PRINTS" id="PR00948">
    <property type="entry name" value="ELICITIN"/>
</dbReference>
<dbReference type="SMART" id="SM01187">
    <property type="entry name" value="Elicitin"/>
    <property type="match status" value="1"/>
</dbReference>
<dbReference type="SUPFAM" id="SSF48647">
    <property type="entry name" value="Fungal elicitin"/>
    <property type="match status" value="1"/>
</dbReference>
<keyword id="KW-1015">Disulfide bond</keyword>
<keyword id="KW-0928">Hypersensitive response elicitation</keyword>
<keyword id="KW-0964">Secreted</keyword>
<keyword id="KW-0732">Signal</keyword>
<organism>
    <name type="scientific">Phytophthora nicotianae</name>
    <name type="common">Potato buckeye rot agent</name>
    <name type="synonym">Phytophthora parasitica</name>
    <dbReference type="NCBI Taxonomy" id="4792"/>
    <lineage>
        <taxon>Eukaryota</taxon>
        <taxon>Sar</taxon>
        <taxon>Stramenopiles</taxon>
        <taxon>Oomycota</taxon>
        <taxon>Peronosporales</taxon>
        <taxon>Peronosporaceae</taxon>
        <taxon>Phytophthora</taxon>
    </lineage>
</organism>
<gene>
    <name type="primary">PARA1</name>
</gene>
<accession>P41801</accession>
<comment type="function">
    <text>Induces local and distal defense responses (incompatible hypersensitive reaction) in plants from the solanaceae and cruciferae families. Elicits leaf necrosis and causes the accumulation of pathogenesis-related proteins. Might interact with the lipidic molecules of the plasma membrane.</text>
</comment>
<comment type="subcellular location">
    <subcellularLocation>
        <location>Secreted</location>
    </subcellularLocation>
</comment>
<comment type="similarity">
    <text evidence="2">Belongs to the elicitin family.</text>
</comment>
<name>ELI_PHYNI</name>